<protein>
    <recommendedName>
        <fullName evidence="1">Cytochrome b6-f complex subunit 5</fullName>
    </recommendedName>
    <alternativeName>
        <fullName evidence="1">Cytochrome b6-f complex subunit PetG</fullName>
    </alternativeName>
    <alternativeName>
        <fullName evidence="1">Cytochrome b6-f complex subunit V</fullName>
    </alternativeName>
</protein>
<proteinExistence type="inferred from homology"/>
<feature type="chain" id="PRO_0000216391" description="Cytochrome b6-f complex subunit 5">
    <location>
        <begin position="1"/>
        <end position="37"/>
    </location>
</feature>
<feature type="transmembrane region" description="Helical" evidence="1">
    <location>
        <begin position="5"/>
        <end position="25"/>
    </location>
</feature>
<organism>
    <name type="scientific">Nymphaea alba</name>
    <name type="common">White water-lily</name>
    <name type="synonym">Castalia alba</name>
    <dbReference type="NCBI Taxonomy" id="34301"/>
    <lineage>
        <taxon>Eukaryota</taxon>
        <taxon>Viridiplantae</taxon>
        <taxon>Streptophyta</taxon>
        <taxon>Embryophyta</taxon>
        <taxon>Tracheophyta</taxon>
        <taxon>Spermatophyta</taxon>
        <taxon>Magnoliopsida</taxon>
        <taxon>Nymphaeales</taxon>
        <taxon>Nymphaeaceae</taxon>
        <taxon>Nymphaea</taxon>
    </lineage>
</organism>
<keyword id="KW-0150">Chloroplast</keyword>
<keyword id="KW-0249">Electron transport</keyword>
<keyword id="KW-0472">Membrane</keyword>
<keyword id="KW-0602">Photosynthesis</keyword>
<keyword id="KW-0934">Plastid</keyword>
<keyword id="KW-0793">Thylakoid</keyword>
<keyword id="KW-0812">Transmembrane</keyword>
<keyword id="KW-1133">Transmembrane helix</keyword>
<keyword id="KW-0813">Transport</keyword>
<comment type="function">
    <text evidence="1">Component of the cytochrome b6-f complex, which mediates electron transfer between photosystem II (PSII) and photosystem I (PSI), cyclic electron flow around PSI, and state transitions. PetG is required for either the stability or assembly of the cytochrome b6-f complex.</text>
</comment>
<comment type="subunit">
    <text evidence="1">The 4 large subunits of the cytochrome b6-f complex are cytochrome b6, subunit IV (17 kDa polypeptide, PetD), cytochrome f and the Rieske protein, while the 4 small subunits are PetG, PetL, PetM and PetN. The complex functions as a dimer.</text>
</comment>
<comment type="subcellular location">
    <subcellularLocation>
        <location evidence="1">Plastid</location>
        <location evidence="1">Chloroplast thylakoid membrane</location>
        <topology evidence="1">Single-pass membrane protein</topology>
    </subcellularLocation>
</comment>
<comment type="similarity">
    <text evidence="1">Belongs to the PetG family.</text>
</comment>
<evidence type="ECO:0000255" key="1">
    <source>
        <dbReference type="HAMAP-Rule" id="MF_00432"/>
    </source>
</evidence>
<reference key="1">
    <citation type="journal article" date="2004" name="Mol. Biol. Evol.">
        <title>The chloroplast genome of Nymphaea alba: whole-genome analyses and the problem of identifying the most basal angiosperm.</title>
        <authorList>
            <person name="Goremykin V.V."/>
            <person name="Hirsch-Ernst K.I."/>
            <person name="Woelfl S."/>
            <person name="Hellwig F.H."/>
        </authorList>
    </citation>
    <scope>NUCLEOTIDE SEQUENCE [LARGE SCALE GENOMIC DNA]</scope>
</reference>
<geneLocation type="chloroplast"/>
<sequence length="37" mass="4204">MIEVFLFGIVLGLIPITLAGLFVTAYLQYRRGDQLDF</sequence>
<accession>Q6EW34</accession>
<gene>
    <name evidence="1" type="primary">petG</name>
</gene>
<name>PETG_NYMAL</name>
<dbReference type="EMBL" id="AJ627251">
    <property type="protein sequence ID" value="CAF28612.1"/>
    <property type="molecule type" value="Genomic_DNA"/>
</dbReference>
<dbReference type="RefSeq" id="YP_053174.1">
    <property type="nucleotide sequence ID" value="NC_006050.1"/>
</dbReference>
<dbReference type="SMR" id="Q6EW34"/>
<dbReference type="GeneID" id="2896219"/>
<dbReference type="GO" id="GO:0009535">
    <property type="term" value="C:chloroplast thylakoid membrane"/>
    <property type="evidence" value="ECO:0007669"/>
    <property type="project" value="UniProtKB-SubCell"/>
</dbReference>
<dbReference type="GO" id="GO:0009512">
    <property type="term" value="C:cytochrome b6f complex"/>
    <property type="evidence" value="ECO:0007669"/>
    <property type="project" value="InterPro"/>
</dbReference>
<dbReference type="GO" id="GO:0045158">
    <property type="term" value="F:electron transporter, transferring electrons within cytochrome b6/f complex of photosystem II activity"/>
    <property type="evidence" value="ECO:0007669"/>
    <property type="project" value="UniProtKB-UniRule"/>
</dbReference>
<dbReference type="GO" id="GO:0017004">
    <property type="term" value="P:cytochrome complex assembly"/>
    <property type="evidence" value="ECO:0007669"/>
    <property type="project" value="UniProtKB-UniRule"/>
</dbReference>
<dbReference type="GO" id="GO:0015979">
    <property type="term" value="P:photosynthesis"/>
    <property type="evidence" value="ECO:0007669"/>
    <property type="project" value="UniProtKB-KW"/>
</dbReference>
<dbReference type="HAMAP" id="MF_00432">
    <property type="entry name" value="Cytb6_f_PetG"/>
    <property type="match status" value="1"/>
</dbReference>
<dbReference type="InterPro" id="IPR003683">
    <property type="entry name" value="Cyt_6/f_cplx_su5"/>
</dbReference>
<dbReference type="InterPro" id="IPR036099">
    <property type="entry name" value="Cyt_6/f_cplx_su5_sf"/>
</dbReference>
<dbReference type="NCBIfam" id="NF001907">
    <property type="entry name" value="PRK00665.1"/>
    <property type="match status" value="1"/>
</dbReference>
<dbReference type="Pfam" id="PF02529">
    <property type="entry name" value="PetG"/>
    <property type="match status" value="1"/>
</dbReference>
<dbReference type="PIRSF" id="PIRSF000034">
    <property type="entry name" value="Cyt_b6-f_V"/>
    <property type="match status" value="1"/>
</dbReference>
<dbReference type="SUPFAM" id="SSF103446">
    <property type="entry name" value="PetG subunit of the cytochrome b6f complex"/>
    <property type="match status" value="1"/>
</dbReference>